<name>DUTP_ASFWA</name>
<feature type="chain" id="PRO_0000373136" description="Deoxyuridine 5'-triphosphate nucleotidohydrolase">
    <location>
        <begin position="1"/>
        <end position="165"/>
    </location>
</feature>
<comment type="function">
    <text evidence="1">The viral dUTPase may play a role in lowering the dUTP concentration in natural infections to minimize misincorporation of deoxyuridine into the viral DNA and ensure the fidelity of genome replication.</text>
</comment>
<comment type="catalytic activity">
    <reaction>
        <text>dUTP + H2O = dUMP + diphosphate + H(+)</text>
        <dbReference type="Rhea" id="RHEA:10248"/>
        <dbReference type="ChEBI" id="CHEBI:15377"/>
        <dbReference type="ChEBI" id="CHEBI:15378"/>
        <dbReference type="ChEBI" id="CHEBI:33019"/>
        <dbReference type="ChEBI" id="CHEBI:61555"/>
        <dbReference type="ChEBI" id="CHEBI:246422"/>
        <dbReference type="EC" id="3.6.1.23"/>
    </reaction>
</comment>
<comment type="cofactor">
    <cofactor evidence="1">
        <name>Mg(2+)</name>
        <dbReference type="ChEBI" id="CHEBI:18420"/>
    </cofactor>
</comment>
<comment type="subunit">
    <text evidence="1">Homotrimer.</text>
</comment>
<comment type="subcellular location">
    <subcellularLocation>
        <location evidence="1">Host cytoplasm</location>
    </subcellularLocation>
    <subcellularLocation>
        <location evidence="1">Virion</location>
    </subcellularLocation>
    <text evidence="1">Found in association with viral nucleoid.</text>
</comment>
<comment type="induction">
    <text evidence="2">Expressed in the early phase of the viral replicative cycle.</text>
</comment>
<comment type="similarity">
    <text evidence="2">Belongs to the dUTPase family.</text>
</comment>
<proteinExistence type="inferred from homology"/>
<accession>P0C9C4</accession>
<organismHost>
    <name type="scientific">Ornithodoros</name>
    <name type="common">relapsing fever ticks</name>
    <dbReference type="NCBI Taxonomy" id="6937"/>
</organismHost>
<organismHost>
    <name type="scientific">Phacochoerus aethiopicus</name>
    <name type="common">Warthog</name>
    <dbReference type="NCBI Taxonomy" id="85517"/>
</organismHost>
<organismHost>
    <name type="scientific">Phacochoerus africanus</name>
    <name type="common">Warthog</name>
    <dbReference type="NCBI Taxonomy" id="41426"/>
</organismHost>
<organismHost>
    <name type="scientific">Potamochoerus larvatus</name>
    <name type="common">Bushpig</name>
    <dbReference type="NCBI Taxonomy" id="273792"/>
</organismHost>
<organismHost>
    <name type="scientific">Sus scrofa</name>
    <name type="common">Pig</name>
    <dbReference type="NCBI Taxonomy" id="9823"/>
</organismHost>
<sequence>MATNFFIQPITEEAEAYYPPSVITNKRKDLGVDVYCCSDLVLQPGLNIVRLHIKVACEHMGKKCGFKIMARSSMCTYERLLILANGIGLIDPGYVGELMLKIINLGDTPVQIWAKECLVQLVAQGDHVPDHINILKRNQIFPLFAPTPRGEGRFGSTGEAGIMRT</sequence>
<protein>
    <recommendedName>
        <fullName>Deoxyuridine 5'-triphosphate nucleotidohydrolase</fullName>
        <shortName evidence="1">dUTPase</shortName>
        <ecNumber evidence="1">3.6.1.23</ecNumber>
    </recommendedName>
    <alternativeName>
        <fullName>dUTP pyrophosphatase</fullName>
    </alternativeName>
</protein>
<reference key="1">
    <citation type="submission" date="2003-03" db="EMBL/GenBank/DDBJ databases">
        <title>African swine fever virus genomes.</title>
        <authorList>
            <person name="Kutish G.F."/>
            <person name="Rock D.L."/>
        </authorList>
    </citation>
    <scope>NUCLEOTIDE SEQUENCE [LARGE SCALE GENOMIC DNA]</scope>
</reference>
<gene>
    <name type="ordered locus">War-141</name>
</gene>
<evidence type="ECO:0000250" key="1">
    <source>
        <dbReference type="UniProtKB" id="Q65199"/>
    </source>
</evidence>
<evidence type="ECO:0000305" key="2"/>
<keyword id="KW-0244">Early protein</keyword>
<keyword id="KW-1035">Host cytoplasm</keyword>
<keyword id="KW-0378">Hydrolase</keyword>
<keyword id="KW-0460">Magnesium</keyword>
<keyword id="KW-0479">Metal-binding</keyword>
<keyword id="KW-0546">Nucleotide metabolism</keyword>
<keyword id="KW-0946">Virion</keyword>
<dbReference type="EC" id="3.6.1.23" evidence="1"/>
<dbReference type="EMBL" id="AY261366">
    <property type="status" value="NOT_ANNOTATED_CDS"/>
    <property type="molecule type" value="Genomic_DNA"/>
</dbReference>
<dbReference type="SMR" id="P0C9C4"/>
<dbReference type="Proteomes" id="UP000000858">
    <property type="component" value="Segment"/>
</dbReference>
<dbReference type="GO" id="GO:0030430">
    <property type="term" value="C:host cell cytoplasm"/>
    <property type="evidence" value="ECO:0007669"/>
    <property type="project" value="UniProtKB-SubCell"/>
</dbReference>
<dbReference type="GO" id="GO:0044423">
    <property type="term" value="C:virion component"/>
    <property type="evidence" value="ECO:0007669"/>
    <property type="project" value="UniProtKB-KW"/>
</dbReference>
<dbReference type="GO" id="GO:0004170">
    <property type="term" value="F:dUTP diphosphatase activity"/>
    <property type="evidence" value="ECO:0007669"/>
    <property type="project" value="UniProtKB-EC"/>
</dbReference>
<dbReference type="GO" id="GO:0046872">
    <property type="term" value="F:metal ion binding"/>
    <property type="evidence" value="ECO:0007669"/>
    <property type="project" value="UniProtKB-KW"/>
</dbReference>
<dbReference type="GO" id="GO:0009117">
    <property type="term" value="P:nucleotide metabolic process"/>
    <property type="evidence" value="ECO:0007669"/>
    <property type="project" value="UniProtKB-KW"/>
</dbReference>
<dbReference type="CDD" id="cd07557">
    <property type="entry name" value="trimeric_dUTPase"/>
    <property type="match status" value="1"/>
</dbReference>
<dbReference type="Gene3D" id="2.70.40.10">
    <property type="match status" value="1"/>
</dbReference>
<dbReference type="InterPro" id="IPR029054">
    <property type="entry name" value="dUTPase-like"/>
</dbReference>
<dbReference type="InterPro" id="IPR036157">
    <property type="entry name" value="dUTPase-like_sf"/>
</dbReference>
<dbReference type="InterPro" id="IPR033704">
    <property type="entry name" value="dUTPase_trimeric"/>
</dbReference>
<dbReference type="Pfam" id="PF00692">
    <property type="entry name" value="dUTPase"/>
    <property type="match status" value="1"/>
</dbReference>
<dbReference type="SUPFAM" id="SSF51283">
    <property type="entry name" value="dUTPase-like"/>
    <property type="match status" value="1"/>
</dbReference>
<organism>
    <name type="scientific">African swine fever virus (isolate Warthog/Namibia/Wart80/1980)</name>
    <name type="common">ASFV</name>
    <dbReference type="NCBI Taxonomy" id="561444"/>
    <lineage>
        <taxon>Viruses</taxon>
        <taxon>Varidnaviria</taxon>
        <taxon>Bamfordvirae</taxon>
        <taxon>Nucleocytoviricota</taxon>
        <taxon>Pokkesviricetes</taxon>
        <taxon>Asfuvirales</taxon>
        <taxon>Asfarviridae</taxon>
        <taxon>Asfivirus</taxon>
        <taxon>African swine fever virus</taxon>
    </lineage>
</organism>